<dbReference type="EC" id="2.2.1.7" evidence="1"/>
<dbReference type="EMBL" id="CP000115">
    <property type="protein sequence ID" value="ABA03900.1"/>
    <property type="molecule type" value="Genomic_DNA"/>
</dbReference>
<dbReference type="SMR" id="Q3SUZ1"/>
<dbReference type="STRING" id="323098.Nwi_0633"/>
<dbReference type="KEGG" id="nwi:Nwi_0633"/>
<dbReference type="eggNOG" id="COG1154">
    <property type="taxonomic scope" value="Bacteria"/>
</dbReference>
<dbReference type="HOGENOM" id="CLU_009227_1_4_5"/>
<dbReference type="UniPathway" id="UPA00064">
    <property type="reaction ID" value="UER00091"/>
</dbReference>
<dbReference type="Proteomes" id="UP000002531">
    <property type="component" value="Chromosome"/>
</dbReference>
<dbReference type="GO" id="GO:0008661">
    <property type="term" value="F:1-deoxy-D-xylulose-5-phosphate synthase activity"/>
    <property type="evidence" value="ECO:0007669"/>
    <property type="project" value="UniProtKB-UniRule"/>
</dbReference>
<dbReference type="GO" id="GO:0000287">
    <property type="term" value="F:magnesium ion binding"/>
    <property type="evidence" value="ECO:0007669"/>
    <property type="project" value="UniProtKB-UniRule"/>
</dbReference>
<dbReference type="GO" id="GO:0030976">
    <property type="term" value="F:thiamine pyrophosphate binding"/>
    <property type="evidence" value="ECO:0007669"/>
    <property type="project" value="UniProtKB-UniRule"/>
</dbReference>
<dbReference type="GO" id="GO:0052865">
    <property type="term" value="P:1-deoxy-D-xylulose 5-phosphate biosynthetic process"/>
    <property type="evidence" value="ECO:0007669"/>
    <property type="project" value="UniProtKB-UniPathway"/>
</dbReference>
<dbReference type="GO" id="GO:0019682">
    <property type="term" value="P:glyceraldehyde-3-phosphate metabolic process"/>
    <property type="evidence" value="ECO:0007669"/>
    <property type="project" value="UniProtKB-ARBA"/>
</dbReference>
<dbReference type="GO" id="GO:0016114">
    <property type="term" value="P:terpenoid biosynthetic process"/>
    <property type="evidence" value="ECO:0007669"/>
    <property type="project" value="UniProtKB-UniRule"/>
</dbReference>
<dbReference type="GO" id="GO:0009228">
    <property type="term" value="P:thiamine biosynthetic process"/>
    <property type="evidence" value="ECO:0007669"/>
    <property type="project" value="UniProtKB-UniRule"/>
</dbReference>
<dbReference type="CDD" id="cd02007">
    <property type="entry name" value="TPP_DXS"/>
    <property type="match status" value="1"/>
</dbReference>
<dbReference type="CDD" id="cd07033">
    <property type="entry name" value="TPP_PYR_DXS_TK_like"/>
    <property type="match status" value="1"/>
</dbReference>
<dbReference type="FunFam" id="3.40.50.920:FF:000002">
    <property type="entry name" value="1-deoxy-D-xylulose-5-phosphate synthase"/>
    <property type="match status" value="1"/>
</dbReference>
<dbReference type="FunFam" id="3.40.50.970:FF:000005">
    <property type="entry name" value="1-deoxy-D-xylulose-5-phosphate synthase"/>
    <property type="match status" value="1"/>
</dbReference>
<dbReference type="Gene3D" id="3.40.50.920">
    <property type="match status" value="1"/>
</dbReference>
<dbReference type="Gene3D" id="3.40.50.970">
    <property type="match status" value="2"/>
</dbReference>
<dbReference type="HAMAP" id="MF_00315">
    <property type="entry name" value="DXP_synth"/>
    <property type="match status" value="1"/>
</dbReference>
<dbReference type="InterPro" id="IPR005477">
    <property type="entry name" value="Dxylulose-5-P_synthase"/>
</dbReference>
<dbReference type="InterPro" id="IPR029061">
    <property type="entry name" value="THDP-binding"/>
</dbReference>
<dbReference type="InterPro" id="IPR009014">
    <property type="entry name" value="Transketo_C/PFOR_II"/>
</dbReference>
<dbReference type="InterPro" id="IPR005475">
    <property type="entry name" value="Transketolase-like_Pyr-bd"/>
</dbReference>
<dbReference type="InterPro" id="IPR020826">
    <property type="entry name" value="Transketolase_BS"/>
</dbReference>
<dbReference type="InterPro" id="IPR033248">
    <property type="entry name" value="Transketolase_C"/>
</dbReference>
<dbReference type="InterPro" id="IPR049557">
    <property type="entry name" value="Transketolase_CS"/>
</dbReference>
<dbReference type="NCBIfam" id="TIGR00204">
    <property type="entry name" value="dxs"/>
    <property type="match status" value="1"/>
</dbReference>
<dbReference type="NCBIfam" id="NF003933">
    <property type="entry name" value="PRK05444.2-2"/>
    <property type="match status" value="1"/>
</dbReference>
<dbReference type="PANTHER" id="PTHR43322">
    <property type="entry name" value="1-D-DEOXYXYLULOSE 5-PHOSPHATE SYNTHASE-RELATED"/>
    <property type="match status" value="1"/>
</dbReference>
<dbReference type="PANTHER" id="PTHR43322:SF5">
    <property type="entry name" value="1-DEOXY-D-XYLULOSE-5-PHOSPHATE SYNTHASE, CHLOROPLASTIC"/>
    <property type="match status" value="1"/>
</dbReference>
<dbReference type="Pfam" id="PF13292">
    <property type="entry name" value="DXP_synthase_N"/>
    <property type="match status" value="1"/>
</dbReference>
<dbReference type="Pfam" id="PF02779">
    <property type="entry name" value="Transket_pyr"/>
    <property type="match status" value="1"/>
</dbReference>
<dbReference type="Pfam" id="PF02780">
    <property type="entry name" value="Transketolase_C"/>
    <property type="match status" value="1"/>
</dbReference>
<dbReference type="SMART" id="SM00861">
    <property type="entry name" value="Transket_pyr"/>
    <property type="match status" value="1"/>
</dbReference>
<dbReference type="SUPFAM" id="SSF52518">
    <property type="entry name" value="Thiamin diphosphate-binding fold (THDP-binding)"/>
    <property type="match status" value="2"/>
</dbReference>
<dbReference type="SUPFAM" id="SSF52922">
    <property type="entry name" value="TK C-terminal domain-like"/>
    <property type="match status" value="1"/>
</dbReference>
<dbReference type="PROSITE" id="PS00801">
    <property type="entry name" value="TRANSKETOLASE_1"/>
    <property type="match status" value="1"/>
</dbReference>
<dbReference type="PROSITE" id="PS00802">
    <property type="entry name" value="TRANSKETOLASE_2"/>
    <property type="match status" value="1"/>
</dbReference>
<comment type="function">
    <text evidence="1">Catalyzes the acyloin condensation reaction between C atoms 2 and 3 of pyruvate and glyceraldehyde 3-phosphate to yield 1-deoxy-D-xylulose-5-phosphate (DXP).</text>
</comment>
<comment type="catalytic activity">
    <reaction evidence="1">
        <text>D-glyceraldehyde 3-phosphate + pyruvate + H(+) = 1-deoxy-D-xylulose 5-phosphate + CO2</text>
        <dbReference type="Rhea" id="RHEA:12605"/>
        <dbReference type="ChEBI" id="CHEBI:15361"/>
        <dbReference type="ChEBI" id="CHEBI:15378"/>
        <dbReference type="ChEBI" id="CHEBI:16526"/>
        <dbReference type="ChEBI" id="CHEBI:57792"/>
        <dbReference type="ChEBI" id="CHEBI:59776"/>
        <dbReference type="EC" id="2.2.1.7"/>
    </reaction>
</comment>
<comment type="cofactor">
    <cofactor evidence="1">
        <name>Mg(2+)</name>
        <dbReference type="ChEBI" id="CHEBI:18420"/>
    </cofactor>
    <text evidence="1">Binds 1 Mg(2+) ion per subunit.</text>
</comment>
<comment type="cofactor">
    <cofactor evidence="1">
        <name>thiamine diphosphate</name>
        <dbReference type="ChEBI" id="CHEBI:58937"/>
    </cofactor>
    <text evidence="1">Binds 1 thiamine pyrophosphate per subunit.</text>
</comment>
<comment type="pathway">
    <text evidence="1">Metabolic intermediate biosynthesis; 1-deoxy-D-xylulose 5-phosphate biosynthesis; 1-deoxy-D-xylulose 5-phosphate from D-glyceraldehyde 3-phosphate and pyruvate: step 1/1.</text>
</comment>
<comment type="subunit">
    <text evidence="1">Homodimer.</text>
</comment>
<comment type="similarity">
    <text evidence="1">Belongs to the transketolase family. DXPS subfamily.</text>
</comment>
<organism>
    <name type="scientific">Nitrobacter winogradskyi (strain ATCC 25391 / DSM 10237 / CIP 104748 / NCIMB 11846 / Nb-255)</name>
    <dbReference type="NCBI Taxonomy" id="323098"/>
    <lineage>
        <taxon>Bacteria</taxon>
        <taxon>Pseudomonadati</taxon>
        <taxon>Pseudomonadota</taxon>
        <taxon>Alphaproteobacteria</taxon>
        <taxon>Hyphomicrobiales</taxon>
        <taxon>Nitrobacteraceae</taxon>
        <taxon>Nitrobacter</taxon>
    </lineage>
</organism>
<evidence type="ECO:0000255" key="1">
    <source>
        <dbReference type="HAMAP-Rule" id="MF_00315"/>
    </source>
</evidence>
<protein>
    <recommendedName>
        <fullName evidence="1">1-deoxy-D-xylulose-5-phosphate synthase</fullName>
        <ecNumber evidence="1">2.2.1.7</ecNumber>
    </recommendedName>
    <alternativeName>
        <fullName evidence="1">1-deoxyxylulose-5-phosphate synthase</fullName>
        <shortName evidence="1">DXP synthase</shortName>
        <shortName evidence="1">DXPS</shortName>
    </alternativeName>
</protein>
<proteinExistence type="inferred from homology"/>
<gene>
    <name evidence="1" type="primary">dxs</name>
    <name type="ordered locus">Nwi_0633</name>
</gene>
<feature type="chain" id="PRO_0000256446" description="1-deoxy-D-xylulose-5-phosphate synthase">
    <location>
        <begin position="1"/>
        <end position="666"/>
    </location>
</feature>
<feature type="binding site" evidence="1">
    <location>
        <position position="103"/>
    </location>
    <ligand>
        <name>thiamine diphosphate</name>
        <dbReference type="ChEBI" id="CHEBI:58937"/>
    </ligand>
</feature>
<feature type="binding site" evidence="1">
    <location>
        <begin position="144"/>
        <end position="146"/>
    </location>
    <ligand>
        <name>thiamine diphosphate</name>
        <dbReference type="ChEBI" id="CHEBI:58937"/>
    </ligand>
</feature>
<feature type="binding site" evidence="1">
    <location>
        <position position="175"/>
    </location>
    <ligand>
        <name>Mg(2+)</name>
        <dbReference type="ChEBI" id="CHEBI:18420"/>
    </ligand>
</feature>
<feature type="binding site" evidence="1">
    <location>
        <begin position="176"/>
        <end position="177"/>
    </location>
    <ligand>
        <name>thiamine diphosphate</name>
        <dbReference type="ChEBI" id="CHEBI:58937"/>
    </ligand>
</feature>
<feature type="binding site" evidence="1">
    <location>
        <position position="204"/>
    </location>
    <ligand>
        <name>Mg(2+)</name>
        <dbReference type="ChEBI" id="CHEBI:18420"/>
    </ligand>
</feature>
<feature type="binding site" evidence="1">
    <location>
        <position position="204"/>
    </location>
    <ligand>
        <name>thiamine diphosphate</name>
        <dbReference type="ChEBI" id="CHEBI:58937"/>
    </ligand>
</feature>
<feature type="binding site" evidence="1">
    <location>
        <position position="314"/>
    </location>
    <ligand>
        <name>thiamine diphosphate</name>
        <dbReference type="ChEBI" id="CHEBI:58937"/>
    </ligand>
</feature>
<feature type="binding site" evidence="1">
    <location>
        <position position="396"/>
    </location>
    <ligand>
        <name>thiamine diphosphate</name>
        <dbReference type="ChEBI" id="CHEBI:58937"/>
    </ligand>
</feature>
<accession>Q3SUZ1</accession>
<sequence length="666" mass="71480">MNVCCVKIPACVRRFRTCQIGNVAVTDFSSTPLLDTIRTPADLRKLKVEQVRQVADELRLETIDAVSVTGGHFGAGLGVVELTTAIHYIFDTPRDRLIWDVGHQAYPHKILTGRRDRIRTLRTGGGLSGFTKRTESDYDPFGAAHSSTSISASLGMAVARDLSGGNNNVIAVIGDGAMSAGMAYEAMNNAGAMNSRLIVILNDNDMSIAPPVGAMSAYLSRLYSGKTYRSLREAAKQLGKHLPKMIADRAERVEEYSRGFMTNSGTLFEELGFYYVGPIDGHNLDHLLPVLKNVRDMENGPILVHVVTQKGKGYPPAEAAADKYHAVVKFDISTGAQSKSKPNAPSYQNVFGASLVKEAEKDDKIVAITAAMPSGTGVDIFNNAFPERTFDVGIAEQHAVTFAAGLATEGFKPFCAIYSTFLQRGYDQVVHDVAIQSLPVRFAIDRAGLVGADGATHAGSFDNAFLGCLPNMVIMAAADEAELVHMVATQVAINDRPSAVRYPRGEGRGVEMPEVGVPLPIGKGRIVRQGSKIALLSFGTRLAECEKAADELAAHGLSTTIADARFMKPLDVDLALKLAREHDVLITIEEGSIGGFGSHVMQTLMDNGALDGGLVRVRSMILPDEFLDHDTPTAMYARAGLDAKGIVAKVFEALGKDVNTETVKLA</sequence>
<reference key="1">
    <citation type="journal article" date="2006" name="Appl. Environ. Microbiol.">
        <title>Genome sequence of the chemolithoautotrophic nitrite-oxidizing bacterium Nitrobacter winogradskyi Nb-255.</title>
        <authorList>
            <person name="Starkenburg S.R."/>
            <person name="Chain P.S.G."/>
            <person name="Sayavedra-Soto L.A."/>
            <person name="Hauser L."/>
            <person name="Land M.L."/>
            <person name="Larimer F.W."/>
            <person name="Malfatti S.A."/>
            <person name="Klotz M.G."/>
            <person name="Bottomley P.J."/>
            <person name="Arp D.J."/>
            <person name="Hickey W.J."/>
        </authorList>
    </citation>
    <scope>NUCLEOTIDE SEQUENCE [LARGE SCALE GENOMIC DNA]</scope>
    <source>
        <strain>ATCC 25391 / DSM 10237 / CIP 104748 / NCIMB 11846 / Nb-255</strain>
    </source>
</reference>
<keyword id="KW-0414">Isoprene biosynthesis</keyword>
<keyword id="KW-0460">Magnesium</keyword>
<keyword id="KW-0479">Metal-binding</keyword>
<keyword id="KW-1185">Reference proteome</keyword>
<keyword id="KW-0784">Thiamine biosynthesis</keyword>
<keyword id="KW-0786">Thiamine pyrophosphate</keyword>
<keyword id="KW-0808">Transferase</keyword>
<name>DXS_NITWN</name>